<evidence type="ECO:0000255" key="1">
    <source>
        <dbReference type="HAMAP-Rule" id="MF_01331"/>
    </source>
</evidence>
<evidence type="ECO:0000305" key="2"/>
<organism>
    <name type="scientific">Marinomonas sp. (strain MWYL1)</name>
    <dbReference type="NCBI Taxonomy" id="400668"/>
    <lineage>
        <taxon>Bacteria</taxon>
        <taxon>Pseudomonadati</taxon>
        <taxon>Pseudomonadota</taxon>
        <taxon>Gammaproteobacteria</taxon>
        <taxon>Oceanospirillales</taxon>
        <taxon>Oceanospirillaceae</taxon>
        <taxon>Marinomonas</taxon>
    </lineage>
</organism>
<comment type="function">
    <text evidence="1">This protein binds specifically to 23S rRNA; its binding is stimulated by other ribosomal proteins, e.g. L4, L17, and L20. It is important during the early stages of 50S assembly. It makes multiple contacts with different domains of the 23S rRNA in the assembled 50S subunit and ribosome (By similarity).</text>
</comment>
<comment type="function">
    <text evidence="1">The globular domain of the protein is located near the polypeptide exit tunnel on the outside of the subunit, while an extended beta-hairpin is found that lines the wall of the exit tunnel in the center of the 70S ribosome.</text>
</comment>
<comment type="subunit">
    <text evidence="1">Part of the 50S ribosomal subunit.</text>
</comment>
<comment type="similarity">
    <text evidence="1">Belongs to the universal ribosomal protein uL22 family.</text>
</comment>
<keyword id="KW-0687">Ribonucleoprotein</keyword>
<keyword id="KW-0689">Ribosomal protein</keyword>
<keyword id="KW-0694">RNA-binding</keyword>
<keyword id="KW-0699">rRNA-binding</keyword>
<dbReference type="EMBL" id="CP000749">
    <property type="protein sequence ID" value="ABR73166.1"/>
    <property type="molecule type" value="Genomic_DNA"/>
</dbReference>
<dbReference type="SMR" id="A6W387"/>
<dbReference type="STRING" id="400668.Mmwyl1_4271"/>
<dbReference type="KEGG" id="mmw:Mmwyl1_4271"/>
<dbReference type="eggNOG" id="COG0091">
    <property type="taxonomic scope" value="Bacteria"/>
</dbReference>
<dbReference type="HOGENOM" id="CLU_083987_3_3_6"/>
<dbReference type="OrthoDB" id="9805969at2"/>
<dbReference type="GO" id="GO:0022625">
    <property type="term" value="C:cytosolic large ribosomal subunit"/>
    <property type="evidence" value="ECO:0007669"/>
    <property type="project" value="TreeGrafter"/>
</dbReference>
<dbReference type="GO" id="GO:0019843">
    <property type="term" value="F:rRNA binding"/>
    <property type="evidence" value="ECO:0007669"/>
    <property type="project" value="UniProtKB-UniRule"/>
</dbReference>
<dbReference type="GO" id="GO:0003735">
    <property type="term" value="F:structural constituent of ribosome"/>
    <property type="evidence" value="ECO:0007669"/>
    <property type="project" value="InterPro"/>
</dbReference>
<dbReference type="GO" id="GO:0006412">
    <property type="term" value="P:translation"/>
    <property type="evidence" value="ECO:0007669"/>
    <property type="project" value="UniProtKB-UniRule"/>
</dbReference>
<dbReference type="CDD" id="cd00336">
    <property type="entry name" value="Ribosomal_L22"/>
    <property type="match status" value="1"/>
</dbReference>
<dbReference type="FunFam" id="3.90.470.10:FF:000001">
    <property type="entry name" value="50S ribosomal protein L22"/>
    <property type="match status" value="1"/>
</dbReference>
<dbReference type="Gene3D" id="3.90.470.10">
    <property type="entry name" value="Ribosomal protein L22/L17"/>
    <property type="match status" value="1"/>
</dbReference>
<dbReference type="HAMAP" id="MF_01331_B">
    <property type="entry name" value="Ribosomal_uL22_B"/>
    <property type="match status" value="1"/>
</dbReference>
<dbReference type="InterPro" id="IPR001063">
    <property type="entry name" value="Ribosomal_uL22"/>
</dbReference>
<dbReference type="InterPro" id="IPR005727">
    <property type="entry name" value="Ribosomal_uL22_bac/chlpt-type"/>
</dbReference>
<dbReference type="InterPro" id="IPR047867">
    <property type="entry name" value="Ribosomal_uL22_bac/org-type"/>
</dbReference>
<dbReference type="InterPro" id="IPR018260">
    <property type="entry name" value="Ribosomal_uL22_CS"/>
</dbReference>
<dbReference type="InterPro" id="IPR036394">
    <property type="entry name" value="Ribosomal_uL22_sf"/>
</dbReference>
<dbReference type="NCBIfam" id="TIGR01044">
    <property type="entry name" value="rplV_bact"/>
    <property type="match status" value="1"/>
</dbReference>
<dbReference type="PANTHER" id="PTHR13501">
    <property type="entry name" value="CHLOROPLAST 50S RIBOSOMAL PROTEIN L22-RELATED"/>
    <property type="match status" value="1"/>
</dbReference>
<dbReference type="PANTHER" id="PTHR13501:SF8">
    <property type="entry name" value="LARGE RIBOSOMAL SUBUNIT PROTEIN UL22M"/>
    <property type="match status" value="1"/>
</dbReference>
<dbReference type="Pfam" id="PF00237">
    <property type="entry name" value="Ribosomal_L22"/>
    <property type="match status" value="1"/>
</dbReference>
<dbReference type="SUPFAM" id="SSF54843">
    <property type="entry name" value="Ribosomal protein L22"/>
    <property type="match status" value="1"/>
</dbReference>
<dbReference type="PROSITE" id="PS00464">
    <property type="entry name" value="RIBOSOMAL_L22"/>
    <property type="match status" value="1"/>
</dbReference>
<protein>
    <recommendedName>
        <fullName evidence="1">Large ribosomal subunit protein uL22</fullName>
    </recommendedName>
    <alternativeName>
        <fullName evidence="2">50S ribosomal protein L22</fullName>
    </alternativeName>
</protein>
<name>RL22_MARMS</name>
<reference key="1">
    <citation type="submission" date="2007-06" db="EMBL/GenBank/DDBJ databases">
        <title>Complete sequence of Marinomonas sp. MWYL1.</title>
        <authorList>
            <consortium name="US DOE Joint Genome Institute"/>
            <person name="Copeland A."/>
            <person name="Lucas S."/>
            <person name="Lapidus A."/>
            <person name="Barry K."/>
            <person name="Glavina del Rio T."/>
            <person name="Dalin E."/>
            <person name="Tice H."/>
            <person name="Pitluck S."/>
            <person name="Kiss H."/>
            <person name="Brettin T."/>
            <person name="Bruce D."/>
            <person name="Detter J.C."/>
            <person name="Han C."/>
            <person name="Schmutz J."/>
            <person name="Larimer F."/>
            <person name="Land M."/>
            <person name="Hauser L."/>
            <person name="Kyrpides N."/>
            <person name="Kim E."/>
            <person name="Johnston A.W.B."/>
            <person name="Todd J.D."/>
            <person name="Rogers R."/>
            <person name="Wexler M."/>
            <person name="Bond P.L."/>
            <person name="Li Y."/>
            <person name="Richardson P."/>
        </authorList>
    </citation>
    <scope>NUCLEOTIDE SEQUENCE [LARGE SCALE GENOMIC DNA]</scope>
    <source>
        <strain>MWYL1</strain>
    </source>
</reference>
<accession>A6W387</accession>
<proteinExistence type="inferred from homology"/>
<feature type="chain" id="PRO_0000354485" description="Large ribosomal subunit protein uL22">
    <location>
        <begin position="1"/>
        <end position="110"/>
    </location>
</feature>
<gene>
    <name evidence="1" type="primary">rplV</name>
    <name type="ordered locus">Mmwyl1_4271</name>
</gene>
<sequence length="110" mass="11940">MSEVKASLKGARLSAQKARLVVDQIRGKSVSEALNILTFSPKKAAVIVKKVLESAIANAEHNEGADVDDLRVSTAYVDEAMTLKRIMPRAKGRADRILKRGCHITVKVAD</sequence>